<protein>
    <recommendedName>
        <fullName evidence="1">Cyanate hydratase</fullName>
        <shortName evidence="1">Cyanase</shortName>
        <ecNumber evidence="1">4.2.1.104</ecNumber>
    </recommendedName>
    <alternativeName>
        <fullName evidence="1">Cyanate hydrolase</fullName>
    </alternativeName>
    <alternativeName>
        <fullName evidence="1">Cyanate lyase</fullName>
    </alternativeName>
</protein>
<evidence type="ECO:0000255" key="1">
    <source>
        <dbReference type="HAMAP-Rule" id="MF_03139"/>
    </source>
</evidence>
<organism>
    <name type="scientific">Aspergillus oryzae (strain ATCC 42149 / RIB 40)</name>
    <name type="common">Yellow koji mold</name>
    <dbReference type="NCBI Taxonomy" id="510516"/>
    <lineage>
        <taxon>Eukaryota</taxon>
        <taxon>Fungi</taxon>
        <taxon>Dikarya</taxon>
        <taxon>Ascomycota</taxon>
        <taxon>Pezizomycotina</taxon>
        <taxon>Eurotiomycetes</taxon>
        <taxon>Eurotiomycetidae</taxon>
        <taxon>Eurotiales</taxon>
        <taxon>Aspergillaceae</taxon>
        <taxon>Aspergillus</taxon>
        <taxon>Aspergillus subgen. Circumdati</taxon>
    </lineage>
</organism>
<sequence>MSLATLDTSQHPNLPSASATLFKAKAAKKFSFEQIAQHIGRNEVATAAIFYGQAKASPEDITNLASLLGIPQEVLEDQLNGFPDRGKSVEMPPKEPLIYRLYEIVQNYGYAYKAVLNEKFGDGIMSAISFSTKVEKETDADGNNWAVITLRGKWLPFSRF</sequence>
<gene>
    <name evidence="1" type="primary">cyn1</name>
    <name type="ORF">AO090102000190</name>
</gene>
<proteinExistence type="inferred from homology"/>
<keyword id="KW-0456">Lyase</keyword>
<keyword id="KW-1185">Reference proteome</keyword>
<comment type="function">
    <text evidence="1">Catalyzes the reaction of cyanate with bicarbonate to produce ammonia and carbon dioxide.</text>
</comment>
<comment type="catalytic activity">
    <reaction evidence="1">
        <text>cyanate + hydrogencarbonate + 3 H(+) = NH4(+) + 2 CO2</text>
        <dbReference type="Rhea" id="RHEA:11120"/>
        <dbReference type="ChEBI" id="CHEBI:15378"/>
        <dbReference type="ChEBI" id="CHEBI:16526"/>
        <dbReference type="ChEBI" id="CHEBI:17544"/>
        <dbReference type="ChEBI" id="CHEBI:28938"/>
        <dbReference type="ChEBI" id="CHEBI:29195"/>
        <dbReference type="EC" id="4.2.1.104"/>
    </reaction>
</comment>
<comment type="similarity">
    <text evidence="1">Belongs to the cyanase family.</text>
</comment>
<accession>Q2UAX9</accession>
<reference key="1">
    <citation type="journal article" date="2005" name="Nature">
        <title>Genome sequencing and analysis of Aspergillus oryzae.</title>
        <authorList>
            <person name="Machida M."/>
            <person name="Asai K."/>
            <person name="Sano M."/>
            <person name="Tanaka T."/>
            <person name="Kumagai T."/>
            <person name="Terai G."/>
            <person name="Kusumoto K."/>
            <person name="Arima T."/>
            <person name="Akita O."/>
            <person name="Kashiwagi Y."/>
            <person name="Abe K."/>
            <person name="Gomi K."/>
            <person name="Horiuchi H."/>
            <person name="Kitamoto K."/>
            <person name="Kobayashi T."/>
            <person name="Takeuchi M."/>
            <person name="Denning D.W."/>
            <person name="Galagan J.E."/>
            <person name="Nierman W.C."/>
            <person name="Yu J."/>
            <person name="Archer D.B."/>
            <person name="Bennett J.W."/>
            <person name="Bhatnagar D."/>
            <person name="Cleveland T.E."/>
            <person name="Fedorova N.D."/>
            <person name="Gotoh O."/>
            <person name="Horikawa H."/>
            <person name="Hosoyama A."/>
            <person name="Ichinomiya M."/>
            <person name="Igarashi R."/>
            <person name="Iwashita K."/>
            <person name="Juvvadi P.R."/>
            <person name="Kato M."/>
            <person name="Kato Y."/>
            <person name="Kin T."/>
            <person name="Kokubun A."/>
            <person name="Maeda H."/>
            <person name="Maeyama N."/>
            <person name="Maruyama J."/>
            <person name="Nagasaki H."/>
            <person name="Nakajima T."/>
            <person name="Oda K."/>
            <person name="Okada K."/>
            <person name="Paulsen I."/>
            <person name="Sakamoto K."/>
            <person name="Sawano T."/>
            <person name="Takahashi M."/>
            <person name="Takase K."/>
            <person name="Terabayashi Y."/>
            <person name="Wortman J.R."/>
            <person name="Yamada O."/>
            <person name="Yamagata Y."/>
            <person name="Anazawa H."/>
            <person name="Hata Y."/>
            <person name="Koide Y."/>
            <person name="Komori T."/>
            <person name="Koyama Y."/>
            <person name="Minetoki T."/>
            <person name="Suharnan S."/>
            <person name="Tanaka A."/>
            <person name="Isono K."/>
            <person name="Kuhara S."/>
            <person name="Ogasawara N."/>
            <person name="Kikuchi H."/>
        </authorList>
    </citation>
    <scope>NUCLEOTIDE SEQUENCE [LARGE SCALE GENOMIC DNA]</scope>
    <source>
        <strain>ATCC 42149 / RIB 40</strain>
    </source>
</reference>
<feature type="chain" id="PRO_0000403244" description="Cyanate hydratase">
    <location>
        <begin position="1"/>
        <end position="160"/>
    </location>
</feature>
<feature type="active site" evidence="1">
    <location>
        <position position="100"/>
    </location>
</feature>
<feature type="active site" evidence="1">
    <location>
        <position position="103"/>
    </location>
</feature>
<feature type="active site" evidence="1">
    <location>
        <position position="126"/>
    </location>
</feature>
<name>CYNS_ASPOR</name>
<dbReference type="EC" id="4.2.1.104" evidence="1"/>
<dbReference type="EMBL" id="BA000052">
    <property type="protein sequence ID" value="BAE61286.1"/>
    <property type="molecule type" value="Genomic_DNA"/>
</dbReference>
<dbReference type="RefSeq" id="XP_001822419.1">
    <property type="nucleotide sequence ID" value="XM_001822367.1"/>
</dbReference>
<dbReference type="SMR" id="Q2UAX9"/>
<dbReference type="STRING" id="510516.Q2UAX9"/>
<dbReference type="EnsemblFungi" id="BAE61286">
    <property type="protein sequence ID" value="BAE61286"/>
    <property type="gene ID" value="AO090102000190"/>
</dbReference>
<dbReference type="GeneID" id="5994464"/>
<dbReference type="KEGG" id="aor:AO090102000190"/>
<dbReference type="HOGENOM" id="CLU_103452_0_0_1"/>
<dbReference type="OrthoDB" id="14405at5052"/>
<dbReference type="Proteomes" id="UP000006564">
    <property type="component" value="Chromosome 4"/>
</dbReference>
<dbReference type="GO" id="GO:0008824">
    <property type="term" value="F:cyanate hydratase activity"/>
    <property type="evidence" value="ECO:0007669"/>
    <property type="project" value="UniProtKB-UniRule"/>
</dbReference>
<dbReference type="GO" id="GO:0003677">
    <property type="term" value="F:DNA binding"/>
    <property type="evidence" value="ECO:0007669"/>
    <property type="project" value="InterPro"/>
</dbReference>
<dbReference type="GO" id="GO:0009439">
    <property type="term" value="P:cyanate metabolic process"/>
    <property type="evidence" value="ECO:0007669"/>
    <property type="project" value="UniProtKB-UniRule"/>
</dbReference>
<dbReference type="CDD" id="cd00559">
    <property type="entry name" value="Cyanase_C"/>
    <property type="match status" value="1"/>
</dbReference>
<dbReference type="Gene3D" id="3.30.1160.10">
    <property type="entry name" value="Cyanate lyase, C-terminal domain"/>
    <property type="match status" value="1"/>
</dbReference>
<dbReference type="Gene3D" id="1.10.260.40">
    <property type="entry name" value="lambda repressor-like DNA-binding domains"/>
    <property type="match status" value="1"/>
</dbReference>
<dbReference type="HAMAP" id="MF_00535">
    <property type="entry name" value="Cyanate_hydrat"/>
    <property type="match status" value="1"/>
</dbReference>
<dbReference type="InterPro" id="IPR008076">
    <property type="entry name" value="Cyanase"/>
</dbReference>
<dbReference type="InterPro" id="IPR003712">
    <property type="entry name" value="Cyanate_lyase_C"/>
</dbReference>
<dbReference type="InterPro" id="IPR036581">
    <property type="entry name" value="Cyanate_lyase_C_sf"/>
</dbReference>
<dbReference type="InterPro" id="IPR010982">
    <property type="entry name" value="Lambda_DNA-bd_dom_sf"/>
</dbReference>
<dbReference type="NCBIfam" id="TIGR00673">
    <property type="entry name" value="cynS"/>
    <property type="match status" value="1"/>
</dbReference>
<dbReference type="PANTHER" id="PTHR34186">
    <property type="entry name" value="CYANATE HYDRATASE"/>
    <property type="match status" value="1"/>
</dbReference>
<dbReference type="PANTHER" id="PTHR34186:SF2">
    <property type="entry name" value="CYANATE HYDRATASE"/>
    <property type="match status" value="1"/>
</dbReference>
<dbReference type="Pfam" id="PF02560">
    <property type="entry name" value="Cyanate_lyase"/>
    <property type="match status" value="1"/>
</dbReference>
<dbReference type="PIRSF" id="PIRSF001263">
    <property type="entry name" value="Cyanate_hydratas"/>
    <property type="match status" value="1"/>
</dbReference>
<dbReference type="PRINTS" id="PR01693">
    <property type="entry name" value="CYANASE"/>
</dbReference>
<dbReference type="SMART" id="SM01116">
    <property type="entry name" value="Cyanate_lyase"/>
    <property type="match status" value="1"/>
</dbReference>
<dbReference type="SUPFAM" id="SSF55234">
    <property type="entry name" value="Cyanase C-terminal domain"/>
    <property type="match status" value="1"/>
</dbReference>
<dbReference type="SUPFAM" id="SSF47413">
    <property type="entry name" value="lambda repressor-like DNA-binding domains"/>
    <property type="match status" value="1"/>
</dbReference>